<accession>C1CNV7</accession>
<name>RS4_STRZT</name>
<gene>
    <name evidence="1" type="primary">rpsD</name>
    <name type="ordered locus">SPT_0119</name>
</gene>
<sequence length="203" mass="23029">MSRYTGPSWKQARRLGLSLTGTGKELARRNYVPGQHGPNNRSKLSEYGLQLAEKQKLRFTYGVGEKQFRNLFVQATKIKGGILGFNFMLLLERRLDNVVYRLGLATTRRQARQFVNHGHILVDGKRVDIPSYRVTPGQVISVREKSLKVPAILEAVEATLGRPAFVSFDAEKLEGSLTRLPERDEINPEINEALVVEFYNKML</sequence>
<protein>
    <recommendedName>
        <fullName evidence="1">Small ribosomal subunit protein uS4</fullName>
    </recommendedName>
    <alternativeName>
        <fullName evidence="2">30S ribosomal protein S4</fullName>
    </alternativeName>
</protein>
<evidence type="ECO:0000255" key="1">
    <source>
        <dbReference type="HAMAP-Rule" id="MF_01306"/>
    </source>
</evidence>
<evidence type="ECO:0000305" key="2"/>
<proteinExistence type="inferred from homology"/>
<organism>
    <name type="scientific">Streptococcus pneumoniae (strain Taiwan19F-14)</name>
    <dbReference type="NCBI Taxonomy" id="487213"/>
    <lineage>
        <taxon>Bacteria</taxon>
        <taxon>Bacillati</taxon>
        <taxon>Bacillota</taxon>
        <taxon>Bacilli</taxon>
        <taxon>Lactobacillales</taxon>
        <taxon>Streptococcaceae</taxon>
        <taxon>Streptococcus</taxon>
    </lineage>
</organism>
<comment type="function">
    <text evidence="1">One of the primary rRNA binding proteins, it binds directly to 16S rRNA where it nucleates assembly of the body of the 30S subunit.</text>
</comment>
<comment type="function">
    <text evidence="1">With S5 and S12 plays an important role in translational accuracy.</text>
</comment>
<comment type="subunit">
    <text evidence="1">Part of the 30S ribosomal subunit. Contacts protein S5. The interaction surface between S4 and S5 is involved in control of translational fidelity.</text>
</comment>
<comment type="similarity">
    <text evidence="1">Belongs to the universal ribosomal protein uS4 family.</text>
</comment>
<reference key="1">
    <citation type="journal article" date="2010" name="Genome Biol.">
        <title>Structure and dynamics of the pan-genome of Streptococcus pneumoniae and closely related species.</title>
        <authorList>
            <person name="Donati C."/>
            <person name="Hiller N.L."/>
            <person name="Tettelin H."/>
            <person name="Muzzi A."/>
            <person name="Croucher N.J."/>
            <person name="Angiuoli S.V."/>
            <person name="Oggioni M."/>
            <person name="Dunning Hotopp J.C."/>
            <person name="Hu F.Z."/>
            <person name="Riley D.R."/>
            <person name="Covacci A."/>
            <person name="Mitchell T.J."/>
            <person name="Bentley S.D."/>
            <person name="Kilian M."/>
            <person name="Ehrlich G.D."/>
            <person name="Rappuoli R."/>
            <person name="Moxon E.R."/>
            <person name="Masignani V."/>
        </authorList>
    </citation>
    <scope>NUCLEOTIDE SEQUENCE [LARGE SCALE GENOMIC DNA]</scope>
    <source>
        <strain>Taiwan19F-14</strain>
    </source>
</reference>
<keyword id="KW-0687">Ribonucleoprotein</keyword>
<keyword id="KW-0689">Ribosomal protein</keyword>
<keyword id="KW-0694">RNA-binding</keyword>
<keyword id="KW-0699">rRNA-binding</keyword>
<dbReference type="EMBL" id="CP000921">
    <property type="protein sequence ID" value="ACO23133.1"/>
    <property type="molecule type" value="Genomic_DNA"/>
</dbReference>
<dbReference type="RefSeq" id="WP_000092756.1">
    <property type="nucleotide sequence ID" value="NC_012469.1"/>
</dbReference>
<dbReference type="SMR" id="C1CNV7"/>
<dbReference type="GeneID" id="93738707"/>
<dbReference type="KEGG" id="snt:SPT_0119"/>
<dbReference type="HOGENOM" id="CLU_092403_0_1_9"/>
<dbReference type="GO" id="GO:0015935">
    <property type="term" value="C:small ribosomal subunit"/>
    <property type="evidence" value="ECO:0007669"/>
    <property type="project" value="InterPro"/>
</dbReference>
<dbReference type="GO" id="GO:0019843">
    <property type="term" value="F:rRNA binding"/>
    <property type="evidence" value="ECO:0007669"/>
    <property type="project" value="UniProtKB-UniRule"/>
</dbReference>
<dbReference type="GO" id="GO:0003735">
    <property type="term" value="F:structural constituent of ribosome"/>
    <property type="evidence" value="ECO:0007669"/>
    <property type="project" value="InterPro"/>
</dbReference>
<dbReference type="GO" id="GO:0042274">
    <property type="term" value="P:ribosomal small subunit biogenesis"/>
    <property type="evidence" value="ECO:0007669"/>
    <property type="project" value="TreeGrafter"/>
</dbReference>
<dbReference type="GO" id="GO:0006412">
    <property type="term" value="P:translation"/>
    <property type="evidence" value="ECO:0007669"/>
    <property type="project" value="UniProtKB-UniRule"/>
</dbReference>
<dbReference type="CDD" id="cd00165">
    <property type="entry name" value="S4"/>
    <property type="match status" value="1"/>
</dbReference>
<dbReference type="FunFam" id="1.10.1050.10:FF:000001">
    <property type="entry name" value="30S ribosomal protein S4"/>
    <property type="match status" value="1"/>
</dbReference>
<dbReference type="FunFam" id="3.10.290.10:FF:000001">
    <property type="entry name" value="30S ribosomal protein S4"/>
    <property type="match status" value="1"/>
</dbReference>
<dbReference type="Gene3D" id="1.10.1050.10">
    <property type="entry name" value="Ribosomal Protein S4 Delta 41, Chain A, domain 1"/>
    <property type="match status" value="1"/>
</dbReference>
<dbReference type="Gene3D" id="3.10.290.10">
    <property type="entry name" value="RNA-binding S4 domain"/>
    <property type="match status" value="1"/>
</dbReference>
<dbReference type="HAMAP" id="MF_01306_B">
    <property type="entry name" value="Ribosomal_uS4_B"/>
    <property type="match status" value="1"/>
</dbReference>
<dbReference type="InterPro" id="IPR022801">
    <property type="entry name" value="Ribosomal_uS4"/>
</dbReference>
<dbReference type="InterPro" id="IPR005709">
    <property type="entry name" value="Ribosomal_uS4_bac-type"/>
</dbReference>
<dbReference type="InterPro" id="IPR018079">
    <property type="entry name" value="Ribosomal_uS4_CS"/>
</dbReference>
<dbReference type="InterPro" id="IPR001912">
    <property type="entry name" value="Ribosomal_uS4_N"/>
</dbReference>
<dbReference type="InterPro" id="IPR002942">
    <property type="entry name" value="S4_RNA-bd"/>
</dbReference>
<dbReference type="InterPro" id="IPR036986">
    <property type="entry name" value="S4_RNA-bd_sf"/>
</dbReference>
<dbReference type="NCBIfam" id="NF003717">
    <property type="entry name" value="PRK05327.1"/>
    <property type="match status" value="1"/>
</dbReference>
<dbReference type="NCBIfam" id="TIGR01017">
    <property type="entry name" value="rpsD_bact"/>
    <property type="match status" value="1"/>
</dbReference>
<dbReference type="PANTHER" id="PTHR11831">
    <property type="entry name" value="30S 40S RIBOSOMAL PROTEIN"/>
    <property type="match status" value="1"/>
</dbReference>
<dbReference type="PANTHER" id="PTHR11831:SF4">
    <property type="entry name" value="SMALL RIBOSOMAL SUBUNIT PROTEIN US4M"/>
    <property type="match status" value="1"/>
</dbReference>
<dbReference type="Pfam" id="PF00163">
    <property type="entry name" value="Ribosomal_S4"/>
    <property type="match status" value="1"/>
</dbReference>
<dbReference type="Pfam" id="PF01479">
    <property type="entry name" value="S4"/>
    <property type="match status" value="1"/>
</dbReference>
<dbReference type="SMART" id="SM01390">
    <property type="entry name" value="Ribosomal_S4"/>
    <property type="match status" value="1"/>
</dbReference>
<dbReference type="SMART" id="SM00363">
    <property type="entry name" value="S4"/>
    <property type="match status" value="1"/>
</dbReference>
<dbReference type="SUPFAM" id="SSF55174">
    <property type="entry name" value="Alpha-L RNA-binding motif"/>
    <property type="match status" value="1"/>
</dbReference>
<dbReference type="PROSITE" id="PS00632">
    <property type="entry name" value="RIBOSOMAL_S4"/>
    <property type="match status" value="1"/>
</dbReference>
<dbReference type="PROSITE" id="PS50889">
    <property type="entry name" value="S4"/>
    <property type="match status" value="1"/>
</dbReference>
<feature type="chain" id="PRO_1000165431" description="Small ribosomal subunit protein uS4">
    <location>
        <begin position="1"/>
        <end position="203"/>
    </location>
</feature>
<feature type="domain" description="S4 RNA-binding" evidence="1">
    <location>
        <begin position="93"/>
        <end position="156"/>
    </location>
</feature>